<reference key="1">
    <citation type="journal article" date="2007" name="J. Bacteriol.">
        <title>Genome sequence and analysis of the soil cellulolytic actinomycete Thermobifida fusca YX.</title>
        <authorList>
            <person name="Lykidis A."/>
            <person name="Mavromatis K."/>
            <person name="Ivanova N."/>
            <person name="Anderson I."/>
            <person name="Land M."/>
            <person name="DiBartolo G."/>
            <person name="Martinez M."/>
            <person name="Lapidus A."/>
            <person name="Lucas S."/>
            <person name="Copeland A."/>
            <person name="Richardson P."/>
            <person name="Wilson D.B."/>
            <person name="Kyrpides N."/>
        </authorList>
    </citation>
    <scope>NUCLEOTIDE SEQUENCE [LARGE SCALE GENOMIC DNA]</scope>
    <source>
        <strain>YX</strain>
    </source>
</reference>
<keyword id="KW-0067">ATP-binding</keyword>
<keyword id="KW-1003">Cell membrane</keyword>
<keyword id="KW-0472">Membrane</keyword>
<keyword id="KW-0547">Nucleotide-binding</keyword>
<keyword id="KW-1278">Translocase</keyword>
<keyword id="KW-0813">Transport</keyword>
<accession>Q47T99</accession>
<sequence>MATTTEKTPAAPGVVATESNQAVPAISLEKVSKTYRSGQVTTTAVESIDLEIRQGEFFSLLGPSGCGKTTTMRMIAGFEEPTSGVVRLSGKDVTGVPPNRRDVNMVFQSYALFPHMTVAENVAFGLKRKKVPAAEIRTRVAEMLELVELGDRAKYKPRQLSGGQQQRVALARALVNRPSALLLDEPLGALDLKLRQAMQLELKRIQREVGITFVYVTHDQSEALTMSDRIAVMNKGRIEQLGTPAQIYETPATRFVAGFIGTSNILTGTAQRVSDTLVRIDYGGDQHVLANTPQQMSDLGLVITVRPEKIRLGKDVPDANVSRIRGTVREVVYLGATTHYTVRTVDDTDIVVFQQNSSDASNLADHGDTVWLSWRPEHSYVLPG</sequence>
<feature type="chain" id="PRO_0000286318" description="Spermidine/putrescine import ATP-binding protein PotA">
    <location>
        <begin position="1"/>
        <end position="384"/>
    </location>
</feature>
<feature type="domain" description="ABC transporter" evidence="1">
    <location>
        <begin position="26"/>
        <end position="260"/>
    </location>
</feature>
<feature type="binding site" evidence="1">
    <location>
        <begin position="62"/>
        <end position="69"/>
    </location>
    <ligand>
        <name>ATP</name>
        <dbReference type="ChEBI" id="CHEBI:30616"/>
    </ligand>
</feature>
<organism>
    <name type="scientific">Thermobifida fusca (strain YX)</name>
    <dbReference type="NCBI Taxonomy" id="269800"/>
    <lineage>
        <taxon>Bacteria</taxon>
        <taxon>Bacillati</taxon>
        <taxon>Actinomycetota</taxon>
        <taxon>Actinomycetes</taxon>
        <taxon>Streptosporangiales</taxon>
        <taxon>Nocardiopsidaceae</taxon>
        <taxon>Thermobifida</taxon>
    </lineage>
</organism>
<evidence type="ECO:0000255" key="1">
    <source>
        <dbReference type="HAMAP-Rule" id="MF_01726"/>
    </source>
</evidence>
<dbReference type="EC" id="7.6.2.11" evidence="1"/>
<dbReference type="EMBL" id="CP000088">
    <property type="protein sequence ID" value="AAZ54318.1"/>
    <property type="molecule type" value="Genomic_DNA"/>
</dbReference>
<dbReference type="RefSeq" id="WP_011290727.1">
    <property type="nucleotide sequence ID" value="NC_007333.1"/>
</dbReference>
<dbReference type="SMR" id="Q47T99"/>
<dbReference type="STRING" id="269800.Tfu_0280"/>
<dbReference type="KEGG" id="tfu:Tfu_0280"/>
<dbReference type="eggNOG" id="COG3842">
    <property type="taxonomic scope" value="Bacteria"/>
</dbReference>
<dbReference type="HOGENOM" id="CLU_000604_1_1_11"/>
<dbReference type="OrthoDB" id="7838608at2"/>
<dbReference type="GO" id="GO:0043190">
    <property type="term" value="C:ATP-binding cassette (ABC) transporter complex"/>
    <property type="evidence" value="ECO:0007669"/>
    <property type="project" value="InterPro"/>
</dbReference>
<dbReference type="GO" id="GO:0015594">
    <property type="term" value="F:ABC-type putrescine transporter activity"/>
    <property type="evidence" value="ECO:0007669"/>
    <property type="project" value="InterPro"/>
</dbReference>
<dbReference type="GO" id="GO:0005524">
    <property type="term" value="F:ATP binding"/>
    <property type="evidence" value="ECO:0007669"/>
    <property type="project" value="UniProtKB-KW"/>
</dbReference>
<dbReference type="GO" id="GO:0016887">
    <property type="term" value="F:ATP hydrolysis activity"/>
    <property type="evidence" value="ECO:0007669"/>
    <property type="project" value="InterPro"/>
</dbReference>
<dbReference type="CDD" id="cd03300">
    <property type="entry name" value="ABC_PotA_N"/>
    <property type="match status" value="1"/>
</dbReference>
<dbReference type="FunFam" id="3.40.50.300:FF:000133">
    <property type="entry name" value="Spermidine/putrescine import ATP-binding protein PotA"/>
    <property type="match status" value="1"/>
</dbReference>
<dbReference type="Gene3D" id="2.40.50.100">
    <property type="match status" value="1"/>
</dbReference>
<dbReference type="Gene3D" id="3.40.50.300">
    <property type="entry name" value="P-loop containing nucleotide triphosphate hydrolases"/>
    <property type="match status" value="1"/>
</dbReference>
<dbReference type="InterPro" id="IPR003593">
    <property type="entry name" value="AAA+_ATPase"/>
</dbReference>
<dbReference type="InterPro" id="IPR050093">
    <property type="entry name" value="ABC_SmlMolc_Importer"/>
</dbReference>
<dbReference type="InterPro" id="IPR003439">
    <property type="entry name" value="ABC_transporter-like_ATP-bd"/>
</dbReference>
<dbReference type="InterPro" id="IPR017871">
    <property type="entry name" value="ABC_transporter-like_CS"/>
</dbReference>
<dbReference type="InterPro" id="IPR008995">
    <property type="entry name" value="Mo/tungstate-bd_C_term_dom"/>
</dbReference>
<dbReference type="InterPro" id="IPR027417">
    <property type="entry name" value="P-loop_NTPase"/>
</dbReference>
<dbReference type="InterPro" id="IPR005893">
    <property type="entry name" value="PotA-like"/>
</dbReference>
<dbReference type="InterPro" id="IPR017879">
    <property type="entry name" value="PotA_ATP-bd"/>
</dbReference>
<dbReference type="InterPro" id="IPR013611">
    <property type="entry name" value="Transp-assoc_OB_typ2"/>
</dbReference>
<dbReference type="NCBIfam" id="TIGR01187">
    <property type="entry name" value="potA"/>
    <property type="match status" value="1"/>
</dbReference>
<dbReference type="PANTHER" id="PTHR42781">
    <property type="entry name" value="SPERMIDINE/PUTRESCINE IMPORT ATP-BINDING PROTEIN POTA"/>
    <property type="match status" value="1"/>
</dbReference>
<dbReference type="PANTHER" id="PTHR42781:SF4">
    <property type="entry name" value="SPERMIDINE_PUTRESCINE IMPORT ATP-BINDING PROTEIN POTA"/>
    <property type="match status" value="1"/>
</dbReference>
<dbReference type="Pfam" id="PF00005">
    <property type="entry name" value="ABC_tran"/>
    <property type="match status" value="1"/>
</dbReference>
<dbReference type="Pfam" id="PF08402">
    <property type="entry name" value="TOBE_2"/>
    <property type="match status" value="1"/>
</dbReference>
<dbReference type="SMART" id="SM00382">
    <property type="entry name" value="AAA"/>
    <property type="match status" value="1"/>
</dbReference>
<dbReference type="SUPFAM" id="SSF50331">
    <property type="entry name" value="MOP-like"/>
    <property type="match status" value="1"/>
</dbReference>
<dbReference type="SUPFAM" id="SSF52540">
    <property type="entry name" value="P-loop containing nucleoside triphosphate hydrolases"/>
    <property type="match status" value="1"/>
</dbReference>
<dbReference type="PROSITE" id="PS00211">
    <property type="entry name" value="ABC_TRANSPORTER_1"/>
    <property type="match status" value="1"/>
</dbReference>
<dbReference type="PROSITE" id="PS50893">
    <property type="entry name" value="ABC_TRANSPORTER_2"/>
    <property type="match status" value="1"/>
</dbReference>
<dbReference type="PROSITE" id="PS51305">
    <property type="entry name" value="POTA"/>
    <property type="match status" value="1"/>
</dbReference>
<name>POTA_THEFY</name>
<gene>
    <name evidence="1" type="primary">potA</name>
    <name type="ordered locus">Tfu_0280</name>
</gene>
<protein>
    <recommendedName>
        <fullName evidence="1">Spermidine/putrescine import ATP-binding protein PotA</fullName>
        <ecNumber evidence="1">7.6.2.11</ecNumber>
    </recommendedName>
</protein>
<comment type="function">
    <text evidence="1">Part of the ABC transporter complex PotABCD involved in spermidine/putrescine import. Responsible for energy coupling to the transport system.</text>
</comment>
<comment type="catalytic activity">
    <reaction evidence="1">
        <text>ATP + H2O + polyamine-[polyamine-binding protein]Side 1 = ADP + phosphate + polyamineSide 2 + [polyamine-binding protein]Side 1.</text>
        <dbReference type="EC" id="7.6.2.11"/>
    </reaction>
</comment>
<comment type="subunit">
    <text evidence="1">The complex is composed of two ATP-binding proteins (PotA), two transmembrane proteins (PotB and PotC) and a solute-binding protein (PotD).</text>
</comment>
<comment type="subcellular location">
    <subcellularLocation>
        <location evidence="1">Cell membrane</location>
        <topology evidence="1">Peripheral membrane protein</topology>
    </subcellularLocation>
</comment>
<comment type="similarity">
    <text evidence="1">Belongs to the ABC transporter superfamily. Spermidine/putrescine importer (TC 3.A.1.11.1) family.</text>
</comment>
<proteinExistence type="inferred from homology"/>